<sequence>MWRIWQLFDPRQALVGLATFLFVLALLIHFILLSTERFNWLEGASTKPVQTSMVMPSSDLAV</sequence>
<organism>
    <name type="scientific">Rhodospirillum rubrum</name>
    <dbReference type="NCBI Taxonomy" id="1085"/>
    <lineage>
        <taxon>Bacteria</taxon>
        <taxon>Pseudomonadati</taxon>
        <taxon>Pseudomonadota</taxon>
        <taxon>Alphaproteobacteria</taxon>
        <taxon>Rhodospirillales</taxon>
        <taxon>Rhodospirillaceae</taxon>
        <taxon>Rhodospirillum</taxon>
    </lineage>
</organism>
<protein>
    <recommendedName>
        <fullName>Light-harvesting protein B-870 alpha chain</fullName>
    </recommendedName>
    <alternativeName>
        <fullName>Antenna pigment protein alpha chain</fullName>
    </alternativeName>
    <alternativeName>
        <fullName>LH-1</fullName>
    </alternativeName>
</protein>
<dbReference type="EMBL" id="M11801">
    <property type="protein sequence ID" value="AAA26462.1"/>
    <property type="molecule type" value="Genomic_DNA"/>
</dbReference>
<dbReference type="PIR" id="B24206">
    <property type="entry name" value="LBQFR"/>
</dbReference>
<dbReference type="RefSeq" id="WP_011390724.1">
    <property type="nucleotide sequence ID" value="NZ_NRSC01000108.1"/>
</dbReference>
<dbReference type="PDB" id="1XRD">
    <property type="method" value="NMR"/>
    <property type="chains" value="A=1-52"/>
</dbReference>
<dbReference type="PDB" id="7EQD">
    <property type="method" value="EM"/>
    <property type="resolution" value="2.76 A"/>
    <property type="chains" value="1/3/5/7/9/A/D/F/I/K/O/Q/S/U/W/Y=1-62"/>
</dbReference>
<dbReference type="PDB" id="9K3Q">
    <property type="method" value="EM"/>
    <property type="resolution" value="3.02 A"/>
    <property type="chains" value="2/4/6/8/A/D/E/F/G/J/N/R/T/V/X/Z=2-46"/>
</dbReference>
<dbReference type="PDBsum" id="1XRD"/>
<dbReference type="PDBsum" id="7EQD"/>
<dbReference type="PDBsum" id="9K3Q"/>
<dbReference type="BMRB" id="P02947"/>
<dbReference type="EMDB" id="EMD-31258"/>
<dbReference type="EMDB" id="EMD-62025"/>
<dbReference type="SMR" id="P02947"/>
<dbReference type="OMA" id="NWLEGPR"/>
<dbReference type="EvolutionaryTrace" id="P02947"/>
<dbReference type="GO" id="GO:0019866">
    <property type="term" value="C:organelle inner membrane"/>
    <property type="evidence" value="ECO:0007669"/>
    <property type="project" value="InterPro"/>
</dbReference>
<dbReference type="GO" id="GO:0005886">
    <property type="term" value="C:plasma membrane"/>
    <property type="evidence" value="ECO:0007669"/>
    <property type="project" value="UniProtKB-SubCell"/>
</dbReference>
<dbReference type="GO" id="GO:0030077">
    <property type="term" value="C:plasma membrane light-harvesting complex"/>
    <property type="evidence" value="ECO:0007669"/>
    <property type="project" value="InterPro"/>
</dbReference>
<dbReference type="GO" id="GO:0042314">
    <property type="term" value="F:bacteriochlorophyll binding"/>
    <property type="evidence" value="ECO:0007669"/>
    <property type="project" value="UniProtKB-KW"/>
</dbReference>
<dbReference type="GO" id="GO:0045156">
    <property type="term" value="F:electron transporter, transferring electrons within the cyclic electron transport pathway of photosynthesis activity"/>
    <property type="evidence" value="ECO:0007669"/>
    <property type="project" value="InterPro"/>
</dbReference>
<dbReference type="GO" id="GO:0046872">
    <property type="term" value="F:metal ion binding"/>
    <property type="evidence" value="ECO:0007669"/>
    <property type="project" value="UniProtKB-KW"/>
</dbReference>
<dbReference type="GO" id="GO:0019684">
    <property type="term" value="P:photosynthesis, light reaction"/>
    <property type="evidence" value="ECO:0007669"/>
    <property type="project" value="InterPro"/>
</dbReference>
<dbReference type="Gene3D" id="4.10.220.20">
    <property type="entry name" value="Light-harvesting complex"/>
    <property type="match status" value="1"/>
</dbReference>
<dbReference type="InterPro" id="IPR000066">
    <property type="entry name" value="Antenna_a/b"/>
</dbReference>
<dbReference type="InterPro" id="IPR018332">
    <property type="entry name" value="Antenna_alpha"/>
</dbReference>
<dbReference type="InterPro" id="IPR002361">
    <property type="entry name" value="Antenna_alpha_CS"/>
</dbReference>
<dbReference type="InterPro" id="IPR035889">
    <property type="entry name" value="Light-harvesting_complex"/>
</dbReference>
<dbReference type="NCBIfam" id="NF040861">
    <property type="entry name" value="pufA_517_ASD"/>
    <property type="match status" value="1"/>
</dbReference>
<dbReference type="Pfam" id="PF00556">
    <property type="entry name" value="LHC"/>
    <property type="match status" value="1"/>
</dbReference>
<dbReference type="PRINTS" id="PR00673">
    <property type="entry name" value="LIGHTHARVSTA"/>
</dbReference>
<dbReference type="SUPFAM" id="SSF56918">
    <property type="entry name" value="Light-harvesting complex subunits"/>
    <property type="match status" value="1"/>
</dbReference>
<dbReference type="PROSITE" id="PS00968">
    <property type="entry name" value="ANTENNA_COMP_ALPHA"/>
    <property type="match status" value="1"/>
</dbReference>
<reference key="1">
    <citation type="journal article" date="1986" name="J. Biol. Chem.">
        <title>Molecular cloning and sequence of the B880 holochrome gene from Rhodospirillum rubrum.</title>
        <authorList>
            <person name="Berard J."/>
            <person name="Belanger G."/>
            <person name="Corriveau P."/>
            <person name="Gingras G."/>
        </authorList>
    </citation>
    <scope>NUCLEOTIDE SEQUENCE [GENOMIC DNA]</scope>
</reference>
<reference key="2">
    <citation type="journal article" date="1981" name="FEBS Lett.">
        <title>The complete amino acid sequence of the single light harvesting protein from chromatophores of Rhodospirillum rubrum G9(+).</title>
        <authorList>
            <person name="Brunisholz R.A."/>
            <person name="Cuendet P.A."/>
            <person name="Theiler R."/>
            <person name="Zuber H."/>
        </authorList>
    </citation>
    <scope>PROTEIN SEQUENCE OF 1-52</scope>
    <scope>FORMYLATION AT MET-1</scope>
    <source>
        <strain>G-9+</strain>
    </source>
</reference>
<reference key="3">
    <citation type="journal article" date="2005" name="J. Mol. Biol.">
        <title>Solution structures of the core light-harvesting alpha and beta polypeptides from Rhodospirillum rubrum: implications for the pigment-protein and protein-protein interactions.</title>
        <authorList>
            <person name="Wang Z.Y."/>
            <person name="Gokan K."/>
            <person name="Kobayashi M."/>
            <person name="Nozawa T."/>
        </authorList>
    </citation>
    <scope>STRUCTURE BY NMR OF 1-52</scope>
</reference>
<accession>P02947</accession>
<name>LHA_RHORU</name>
<feature type="chain" id="PRO_0000001625" description="Light-harvesting protein B-870 alpha chain">
    <location>
        <begin position="1"/>
        <end position="52"/>
    </location>
</feature>
<feature type="propeptide" id="PRO_0000001626">
    <location>
        <begin position="53"/>
        <end position="62"/>
    </location>
</feature>
<feature type="topological domain" description="Cytoplasmic" evidence="1">
    <location>
        <begin position="1"/>
        <end position="12"/>
    </location>
</feature>
<feature type="transmembrane region" description="Helical" evidence="1">
    <location>
        <begin position="13"/>
        <end position="33"/>
    </location>
</feature>
<feature type="topological domain" description="Periplasmic" evidence="1">
    <location>
        <begin position="34"/>
        <end position="52"/>
    </location>
</feature>
<feature type="binding site" description="axial binding residue" evidence="1">
    <location>
        <position position="29"/>
    </location>
    <ligand>
        <name>a bacteriochlorophyll</name>
        <dbReference type="ChEBI" id="CHEBI:38201"/>
    </ligand>
    <ligandPart>
        <name>Mg</name>
        <dbReference type="ChEBI" id="CHEBI:25107"/>
    </ligandPart>
</feature>
<feature type="modified residue" description="N-formylmethionine" evidence="3">
    <location>
        <position position="1"/>
    </location>
</feature>
<feature type="helix" evidence="5">
    <location>
        <begin position="3"/>
        <end position="7"/>
    </location>
</feature>
<feature type="helix" evidence="5">
    <location>
        <begin position="10"/>
        <end position="34"/>
    </location>
</feature>
<feature type="turn" evidence="5">
    <location>
        <begin position="36"/>
        <end position="38"/>
    </location>
</feature>
<feature type="turn" evidence="5">
    <location>
        <begin position="40"/>
        <end position="42"/>
    </location>
</feature>
<feature type="strand" evidence="4">
    <location>
        <begin position="44"/>
        <end position="48"/>
    </location>
</feature>
<evidence type="ECO:0000255" key="1"/>
<evidence type="ECO:0000305" key="2"/>
<evidence type="ECO:0000305" key="3">
    <source ref="2"/>
</evidence>
<evidence type="ECO:0007829" key="4">
    <source>
        <dbReference type="PDB" id="1XRD"/>
    </source>
</evidence>
<evidence type="ECO:0007829" key="5">
    <source>
        <dbReference type="PDB" id="7EQD"/>
    </source>
</evidence>
<keyword id="KW-0002">3D-structure</keyword>
<keyword id="KW-0042">Antenna complex</keyword>
<keyword id="KW-0076">Bacteriochlorophyll</keyword>
<keyword id="KW-0997">Cell inner membrane</keyword>
<keyword id="KW-1003">Cell membrane</keyword>
<keyword id="KW-0148">Chlorophyll</keyword>
<keyword id="KW-0157">Chromophore</keyword>
<keyword id="KW-0903">Direct protein sequencing</keyword>
<keyword id="KW-0291">Formylation</keyword>
<keyword id="KW-0437">Light-harvesting polypeptide</keyword>
<keyword id="KW-0460">Magnesium</keyword>
<keyword id="KW-0472">Membrane</keyword>
<keyword id="KW-0479">Metal-binding</keyword>
<keyword id="KW-0812">Transmembrane</keyword>
<keyword id="KW-1133">Transmembrane helix</keyword>
<proteinExistence type="evidence at protein level"/>
<comment type="function">
    <text>Antenna complexes are light-harvesting systems, which transfer the excitation energy to the reaction centers.</text>
</comment>
<comment type="subunit">
    <text>The core complex is formed by different alpha and beta chains, binding bacteriochlorophyll molecules, and arranged most probably in tetrameric structures disposed around the reaction center. The non-pigmented gamma chains may constitute additional components.</text>
</comment>
<comment type="subcellular location">
    <subcellularLocation>
        <location>Cell inner membrane</location>
        <topology>Single-pass type II membrane protein</topology>
    </subcellularLocation>
</comment>
<comment type="similarity">
    <text evidence="2">Belongs to the antenna complex alpha subunit family.</text>
</comment>